<proteinExistence type="inferred from homology"/>
<protein>
    <recommendedName>
        <fullName evidence="1">Large ribosomal subunit protein uL5</fullName>
    </recommendedName>
    <alternativeName>
        <fullName evidence="2">50S ribosomal protein L5</fullName>
    </alternativeName>
</protein>
<evidence type="ECO:0000255" key="1">
    <source>
        <dbReference type="HAMAP-Rule" id="MF_01333"/>
    </source>
</evidence>
<evidence type="ECO:0000305" key="2"/>
<feature type="chain" id="PRO_1000142476" description="Large ribosomal subunit protein uL5">
    <location>
        <begin position="1"/>
        <end position="179"/>
    </location>
</feature>
<organism>
    <name type="scientific">Xylella fastidiosa (strain M23)</name>
    <dbReference type="NCBI Taxonomy" id="405441"/>
    <lineage>
        <taxon>Bacteria</taxon>
        <taxon>Pseudomonadati</taxon>
        <taxon>Pseudomonadota</taxon>
        <taxon>Gammaproteobacteria</taxon>
        <taxon>Lysobacterales</taxon>
        <taxon>Lysobacteraceae</taxon>
        <taxon>Xylella</taxon>
    </lineage>
</organism>
<name>RL5_XYLF2</name>
<gene>
    <name evidence="1" type="primary">rplE</name>
    <name type="ordered locus">XfasM23_0445</name>
</gene>
<keyword id="KW-0687">Ribonucleoprotein</keyword>
<keyword id="KW-0689">Ribosomal protein</keyword>
<keyword id="KW-0694">RNA-binding</keyword>
<keyword id="KW-0699">rRNA-binding</keyword>
<keyword id="KW-0820">tRNA-binding</keyword>
<sequence length="179" mass="20019">MTRLENMYKKEVVPALIKRFGYSNPMAVPRLVKITLNMGVGEAATNKKVLENALADMAKISGQKPIVTKSRISVASFKIRNGWPIGCKTTLRRSKMYEFLDRLINISLPCVRDFRGIPPRSFDGRGNFNMGVKEQVVFPEIDFDAVDAIRGMDIAITTTANSDAEAKALLDAFNFPFRN</sequence>
<comment type="function">
    <text evidence="1">This is one of the proteins that bind and probably mediate the attachment of the 5S RNA into the large ribosomal subunit, where it forms part of the central protuberance. In the 70S ribosome it contacts protein S13 of the 30S subunit (bridge B1b), connecting the 2 subunits; this bridge is implicated in subunit movement. Contacts the P site tRNA; the 5S rRNA and some of its associated proteins might help stabilize positioning of ribosome-bound tRNAs.</text>
</comment>
<comment type="subunit">
    <text evidence="1">Part of the 50S ribosomal subunit; part of the 5S rRNA/L5/L18/L25 subcomplex. Contacts the 5S rRNA and the P site tRNA. Forms a bridge to the 30S subunit in the 70S ribosome.</text>
</comment>
<comment type="similarity">
    <text evidence="1">Belongs to the universal ribosomal protein uL5 family.</text>
</comment>
<dbReference type="EMBL" id="CP001011">
    <property type="protein sequence ID" value="ACB91892.1"/>
    <property type="molecule type" value="Genomic_DNA"/>
</dbReference>
<dbReference type="RefSeq" id="WP_004090114.1">
    <property type="nucleotide sequence ID" value="NC_010577.1"/>
</dbReference>
<dbReference type="SMR" id="B2I8I1"/>
<dbReference type="GeneID" id="93904151"/>
<dbReference type="KEGG" id="xfn:XfasM23_0445"/>
<dbReference type="HOGENOM" id="CLU_061015_2_1_6"/>
<dbReference type="Proteomes" id="UP000001698">
    <property type="component" value="Chromosome"/>
</dbReference>
<dbReference type="GO" id="GO:1990904">
    <property type="term" value="C:ribonucleoprotein complex"/>
    <property type="evidence" value="ECO:0007669"/>
    <property type="project" value="UniProtKB-KW"/>
</dbReference>
<dbReference type="GO" id="GO:0005840">
    <property type="term" value="C:ribosome"/>
    <property type="evidence" value="ECO:0007669"/>
    <property type="project" value="UniProtKB-KW"/>
</dbReference>
<dbReference type="GO" id="GO:0019843">
    <property type="term" value="F:rRNA binding"/>
    <property type="evidence" value="ECO:0007669"/>
    <property type="project" value="UniProtKB-UniRule"/>
</dbReference>
<dbReference type="GO" id="GO:0003735">
    <property type="term" value="F:structural constituent of ribosome"/>
    <property type="evidence" value="ECO:0007669"/>
    <property type="project" value="InterPro"/>
</dbReference>
<dbReference type="GO" id="GO:0000049">
    <property type="term" value="F:tRNA binding"/>
    <property type="evidence" value="ECO:0007669"/>
    <property type="project" value="UniProtKB-UniRule"/>
</dbReference>
<dbReference type="GO" id="GO:0006412">
    <property type="term" value="P:translation"/>
    <property type="evidence" value="ECO:0007669"/>
    <property type="project" value="UniProtKB-UniRule"/>
</dbReference>
<dbReference type="FunFam" id="3.30.1440.10:FF:000001">
    <property type="entry name" value="50S ribosomal protein L5"/>
    <property type="match status" value="1"/>
</dbReference>
<dbReference type="Gene3D" id="3.30.1440.10">
    <property type="match status" value="1"/>
</dbReference>
<dbReference type="HAMAP" id="MF_01333_B">
    <property type="entry name" value="Ribosomal_uL5_B"/>
    <property type="match status" value="1"/>
</dbReference>
<dbReference type="InterPro" id="IPR002132">
    <property type="entry name" value="Ribosomal_uL5"/>
</dbReference>
<dbReference type="InterPro" id="IPR020930">
    <property type="entry name" value="Ribosomal_uL5_bac-type"/>
</dbReference>
<dbReference type="InterPro" id="IPR031309">
    <property type="entry name" value="Ribosomal_uL5_C"/>
</dbReference>
<dbReference type="InterPro" id="IPR020929">
    <property type="entry name" value="Ribosomal_uL5_CS"/>
</dbReference>
<dbReference type="InterPro" id="IPR022803">
    <property type="entry name" value="Ribosomal_uL5_dom_sf"/>
</dbReference>
<dbReference type="InterPro" id="IPR031310">
    <property type="entry name" value="Ribosomal_uL5_N"/>
</dbReference>
<dbReference type="NCBIfam" id="NF000585">
    <property type="entry name" value="PRK00010.1"/>
    <property type="match status" value="1"/>
</dbReference>
<dbReference type="PANTHER" id="PTHR11994">
    <property type="entry name" value="60S RIBOSOMAL PROTEIN L11-RELATED"/>
    <property type="match status" value="1"/>
</dbReference>
<dbReference type="Pfam" id="PF00281">
    <property type="entry name" value="Ribosomal_L5"/>
    <property type="match status" value="1"/>
</dbReference>
<dbReference type="Pfam" id="PF00673">
    <property type="entry name" value="Ribosomal_L5_C"/>
    <property type="match status" value="1"/>
</dbReference>
<dbReference type="PIRSF" id="PIRSF002161">
    <property type="entry name" value="Ribosomal_L5"/>
    <property type="match status" value="1"/>
</dbReference>
<dbReference type="SUPFAM" id="SSF55282">
    <property type="entry name" value="RL5-like"/>
    <property type="match status" value="1"/>
</dbReference>
<dbReference type="PROSITE" id="PS00358">
    <property type="entry name" value="RIBOSOMAL_L5"/>
    <property type="match status" value="1"/>
</dbReference>
<reference key="1">
    <citation type="journal article" date="2010" name="J. Bacteriol.">
        <title>Whole genome sequences of two Xylella fastidiosa strains (M12 and M23) causing almond leaf scorch disease in California.</title>
        <authorList>
            <person name="Chen J."/>
            <person name="Xie G."/>
            <person name="Han S."/>
            <person name="Chertkov O."/>
            <person name="Sims D."/>
            <person name="Civerolo E.L."/>
        </authorList>
    </citation>
    <scope>NUCLEOTIDE SEQUENCE [LARGE SCALE GENOMIC DNA]</scope>
    <source>
        <strain>M23</strain>
    </source>
</reference>
<accession>B2I8I1</accession>